<keyword id="KW-0489">Methyltransferase</keyword>
<keyword id="KW-1185">Reference proteome</keyword>
<keyword id="KW-0949">S-adenosyl-L-methionine</keyword>
<keyword id="KW-0808">Transferase</keyword>
<keyword id="KW-0819">tRNA processing</keyword>
<dbReference type="EC" id="2.1.1.33" evidence="2"/>
<dbReference type="EMBL" id="CP000157">
    <property type="protein sequence ID" value="ABC64936.1"/>
    <property type="molecule type" value="Genomic_DNA"/>
</dbReference>
<dbReference type="RefSeq" id="WP_011415758.1">
    <property type="nucleotide sequence ID" value="NC_007722.1"/>
</dbReference>
<dbReference type="SMR" id="Q2N5V5"/>
<dbReference type="STRING" id="314225.ELI_14220"/>
<dbReference type="KEGG" id="eli:ELI_14220"/>
<dbReference type="eggNOG" id="COG0220">
    <property type="taxonomic scope" value="Bacteria"/>
</dbReference>
<dbReference type="HOGENOM" id="CLU_050910_0_3_5"/>
<dbReference type="OrthoDB" id="9802090at2"/>
<dbReference type="UniPathway" id="UPA00989"/>
<dbReference type="Proteomes" id="UP000008808">
    <property type="component" value="Chromosome"/>
</dbReference>
<dbReference type="GO" id="GO:0043527">
    <property type="term" value="C:tRNA methyltransferase complex"/>
    <property type="evidence" value="ECO:0007669"/>
    <property type="project" value="TreeGrafter"/>
</dbReference>
<dbReference type="GO" id="GO:0008176">
    <property type="term" value="F:tRNA (guanine(46)-N7)-methyltransferase activity"/>
    <property type="evidence" value="ECO:0007669"/>
    <property type="project" value="UniProtKB-UniRule"/>
</dbReference>
<dbReference type="Gene3D" id="3.40.50.150">
    <property type="entry name" value="Vaccinia Virus protein VP39"/>
    <property type="match status" value="1"/>
</dbReference>
<dbReference type="HAMAP" id="MF_01057">
    <property type="entry name" value="tRNA_methyltr_TrmB"/>
    <property type="match status" value="1"/>
</dbReference>
<dbReference type="InterPro" id="IPR029063">
    <property type="entry name" value="SAM-dependent_MTases_sf"/>
</dbReference>
<dbReference type="InterPro" id="IPR003358">
    <property type="entry name" value="tRNA_(Gua-N-7)_MeTrfase_Trmb"/>
</dbReference>
<dbReference type="InterPro" id="IPR055361">
    <property type="entry name" value="tRNA_methyltr_TrmB_bact"/>
</dbReference>
<dbReference type="PANTHER" id="PTHR23417">
    <property type="entry name" value="3-DEOXY-D-MANNO-OCTULOSONIC-ACID TRANSFERASE/TRNA GUANINE-N 7 - -METHYLTRANSFERASE"/>
    <property type="match status" value="1"/>
</dbReference>
<dbReference type="PANTHER" id="PTHR23417:SF14">
    <property type="entry name" value="PENTACOTRIPEPTIDE-REPEAT REGION OF PRORP DOMAIN-CONTAINING PROTEIN"/>
    <property type="match status" value="1"/>
</dbReference>
<dbReference type="Pfam" id="PF02390">
    <property type="entry name" value="Methyltransf_4"/>
    <property type="match status" value="1"/>
</dbReference>
<dbReference type="SUPFAM" id="SSF53335">
    <property type="entry name" value="S-adenosyl-L-methionine-dependent methyltransferases"/>
    <property type="match status" value="1"/>
</dbReference>
<dbReference type="PROSITE" id="PS51625">
    <property type="entry name" value="SAM_MT_TRMB"/>
    <property type="match status" value="1"/>
</dbReference>
<protein>
    <recommendedName>
        <fullName evidence="2">tRNA (guanine-N(7)-)-methyltransferase</fullName>
        <ecNumber evidence="2">2.1.1.33</ecNumber>
    </recommendedName>
    <alternativeName>
        <fullName evidence="2">tRNA (guanine(46)-N(7))-methyltransferase</fullName>
    </alternativeName>
    <alternativeName>
        <fullName evidence="2">tRNA(m7G46)-methyltransferase</fullName>
    </alternativeName>
</protein>
<comment type="function">
    <text evidence="2">Catalyzes the formation of N(7)-methylguanine at position 46 (m7G46) in tRNA.</text>
</comment>
<comment type="catalytic activity">
    <reaction evidence="2">
        <text>guanosine(46) in tRNA + S-adenosyl-L-methionine = N(7)-methylguanosine(46) in tRNA + S-adenosyl-L-homocysteine</text>
        <dbReference type="Rhea" id="RHEA:42708"/>
        <dbReference type="Rhea" id="RHEA-COMP:10188"/>
        <dbReference type="Rhea" id="RHEA-COMP:10189"/>
        <dbReference type="ChEBI" id="CHEBI:57856"/>
        <dbReference type="ChEBI" id="CHEBI:59789"/>
        <dbReference type="ChEBI" id="CHEBI:74269"/>
        <dbReference type="ChEBI" id="CHEBI:74480"/>
        <dbReference type="EC" id="2.1.1.33"/>
    </reaction>
</comment>
<comment type="pathway">
    <text evidence="2">tRNA modification; N(7)-methylguanine-tRNA biosynthesis.</text>
</comment>
<comment type="similarity">
    <text evidence="2">Belongs to the class I-like SAM-binding methyltransferase superfamily. TrmB family.</text>
</comment>
<proteinExistence type="inferred from homology"/>
<accession>Q2N5V5</accession>
<evidence type="ECO:0000250" key="1"/>
<evidence type="ECO:0000255" key="2">
    <source>
        <dbReference type="HAMAP-Rule" id="MF_01057"/>
    </source>
</evidence>
<organism>
    <name type="scientific">Erythrobacter litoralis (strain HTCC2594)</name>
    <dbReference type="NCBI Taxonomy" id="314225"/>
    <lineage>
        <taxon>Bacteria</taxon>
        <taxon>Pseudomonadati</taxon>
        <taxon>Pseudomonadota</taxon>
        <taxon>Alphaproteobacteria</taxon>
        <taxon>Sphingomonadales</taxon>
        <taxon>Erythrobacteraceae</taxon>
        <taxon>Erythrobacter/Porphyrobacter group</taxon>
        <taxon>Erythrobacter</taxon>
    </lineage>
</organism>
<name>TRMB_ERYLH</name>
<feature type="chain" id="PRO_0000288146" description="tRNA (guanine-N(7)-)-methyltransferase">
    <location>
        <begin position="1"/>
        <end position="233"/>
    </location>
</feature>
<feature type="active site" evidence="1">
    <location>
        <position position="136"/>
    </location>
</feature>
<feature type="binding site" evidence="2">
    <location>
        <position position="62"/>
    </location>
    <ligand>
        <name>S-adenosyl-L-methionine</name>
        <dbReference type="ChEBI" id="CHEBI:59789"/>
    </ligand>
</feature>
<feature type="binding site" evidence="2">
    <location>
        <position position="87"/>
    </location>
    <ligand>
        <name>S-adenosyl-L-methionine</name>
        <dbReference type="ChEBI" id="CHEBI:59789"/>
    </ligand>
</feature>
<feature type="binding site" evidence="2">
    <location>
        <position position="114"/>
    </location>
    <ligand>
        <name>S-adenosyl-L-methionine</name>
        <dbReference type="ChEBI" id="CHEBI:59789"/>
    </ligand>
</feature>
<feature type="binding site" evidence="2">
    <location>
        <position position="136"/>
    </location>
    <ligand>
        <name>S-adenosyl-L-methionine</name>
        <dbReference type="ChEBI" id="CHEBI:59789"/>
    </ligand>
</feature>
<feature type="binding site" evidence="2">
    <location>
        <position position="140"/>
    </location>
    <ligand>
        <name>substrate</name>
    </ligand>
</feature>
<feature type="binding site" evidence="2">
    <location>
        <position position="172"/>
    </location>
    <ligand>
        <name>substrate</name>
    </ligand>
</feature>
<feature type="binding site" evidence="2">
    <location>
        <begin position="211"/>
        <end position="214"/>
    </location>
    <ligand>
        <name>substrate</name>
    </ligand>
</feature>
<gene>
    <name evidence="2" type="primary">trmB</name>
    <name type="ordered locus">ELI_14220</name>
</gene>
<sequence>MTAFKQGDPTTLNRLYGRSIGKPLRTHQQHLVDNLLPQISPPAEGPVTAERLFGEDCPLHFEIGFGGGEHLVYRADLLPNHGFIGAEPFLNGVASCLSQVEEQRLANIRIHNGDALEVLDRVPDGALTMLYLLHPDPWPKNKHAKRRMMNDGPVKMFADKLKPGGEFRFGTDHPVYLRHALMVMRRHTDAFEWVVEGPSDWQNRPSGWPETRYEHKARTKFGHEVWYFRFRRR</sequence>
<reference key="1">
    <citation type="journal article" date="2009" name="J. Bacteriol.">
        <title>Complete genome sequence of Erythrobacter litoralis HTCC2594.</title>
        <authorList>
            <person name="Oh H.M."/>
            <person name="Giovannoni S.J."/>
            <person name="Ferriera S."/>
            <person name="Johnson J."/>
            <person name="Cho J.C."/>
        </authorList>
    </citation>
    <scope>NUCLEOTIDE SEQUENCE [LARGE SCALE GENOMIC DNA]</scope>
    <source>
        <strain>HTCC2594</strain>
    </source>
</reference>